<name>RS3_PSEU2</name>
<comment type="function">
    <text evidence="1">Binds the lower part of the 30S subunit head. Binds mRNA in the 70S ribosome, positioning it for translation.</text>
</comment>
<comment type="subunit">
    <text evidence="1">Part of the 30S ribosomal subunit. Forms a tight complex with proteins S10 and S14.</text>
</comment>
<comment type="similarity">
    <text evidence="1">Belongs to the universal ribosomal protein uS3 family.</text>
</comment>
<proteinExistence type="inferred from homology"/>
<keyword id="KW-0687">Ribonucleoprotein</keyword>
<keyword id="KW-0689">Ribosomal protein</keyword>
<keyword id="KW-0694">RNA-binding</keyword>
<keyword id="KW-0699">rRNA-binding</keyword>
<feature type="chain" id="PRO_0000230719" description="Small ribosomal subunit protein uS3">
    <location>
        <begin position="1"/>
        <end position="228"/>
    </location>
</feature>
<feature type="domain" description="KH type-2" evidence="1">
    <location>
        <begin position="39"/>
        <end position="107"/>
    </location>
</feature>
<dbReference type="EMBL" id="CP000075">
    <property type="protein sequence ID" value="AAY39572.1"/>
    <property type="molecule type" value="Genomic_DNA"/>
</dbReference>
<dbReference type="RefSeq" id="WP_003176422.1">
    <property type="nucleotide sequence ID" value="NC_007005.1"/>
</dbReference>
<dbReference type="RefSeq" id="YP_237610.1">
    <property type="nucleotide sequence ID" value="NC_007005.1"/>
</dbReference>
<dbReference type="SMR" id="Q4ZMQ0"/>
<dbReference type="STRING" id="205918.Psyr_4542"/>
<dbReference type="GeneID" id="98113701"/>
<dbReference type="KEGG" id="psb:Psyr_4542"/>
<dbReference type="PATRIC" id="fig|205918.7.peg.4681"/>
<dbReference type="eggNOG" id="COG0092">
    <property type="taxonomic scope" value="Bacteria"/>
</dbReference>
<dbReference type="HOGENOM" id="CLU_058591_0_2_6"/>
<dbReference type="OrthoDB" id="9806396at2"/>
<dbReference type="PRO" id="PR:Q4ZMQ0"/>
<dbReference type="Proteomes" id="UP000000426">
    <property type="component" value="Chromosome"/>
</dbReference>
<dbReference type="GO" id="GO:0022627">
    <property type="term" value="C:cytosolic small ribosomal subunit"/>
    <property type="evidence" value="ECO:0007669"/>
    <property type="project" value="TreeGrafter"/>
</dbReference>
<dbReference type="GO" id="GO:0003729">
    <property type="term" value="F:mRNA binding"/>
    <property type="evidence" value="ECO:0007669"/>
    <property type="project" value="UniProtKB-UniRule"/>
</dbReference>
<dbReference type="GO" id="GO:0019843">
    <property type="term" value="F:rRNA binding"/>
    <property type="evidence" value="ECO:0007669"/>
    <property type="project" value="UniProtKB-UniRule"/>
</dbReference>
<dbReference type="GO" id="GO:0003735">
    <property type="term" value="F:structural constituent of ribosome"/>
    <property type="evidence" value="ECO:0007669"/>
    <property type="project" value="InterPro"/>
</dbReference>
<dbReference type="GO" id="GO:0006412">
    <property type="term" value="P:translation"/>
    <property type="evidence" value="ECO:0007669"/>
    <property type="project" value="UniProtKB-UniRule"/>
</dbReference>
<dbReference type="CDD" id="cd02412">
    <property type="entry name" value="KH-II_30S_S3"/>
    <property type="match status" value="1"/>
</dbReference>
<dbReference type="FunFam" id="3.30.1140.32:FF:000001">
    <property type="entry name" value="30S ribosomal protein S3"/>
    <property type="match status" value="1"/>
</dbReference>
<dbReference type="FunFam" id="3.30.300.20:FF:000001">
    <property type="entry name" value="30S ribosomal protein S3"/>
    <property type="match status" value="1"/>
</dbReference>
<dbReference type="Gene3D" id="3.30.300.20">
    <property type="match status" value="1"/>
</dbReference>
<dbReference type="Gene3D" id="3.30.1140.32">
    <property type="entry name" value="Ribosomal protein S3, C-terminal domain"/>
    <property type="match status" value="1"/>
</dbReference>
<dbReference type="HAMAP" id="MF_01309_B">
    <property type="entry name" value="Ribosomal_uS3_B"/>
    <property type="match status" value="1"/>
</dbReference>
<dbReference type="InterPro" id="IPR004087">
    <property type="entry name" value="KH_dom"/>
</dbReference>
<dbReference type="InterPro" id="IPR015946">
    <property type="entry name" value="KH_dom-like_a/b"/>
</dbReference>
<dbReference type="InterPro" id="IPR004044">
    <property type="entry name" value="KH_dom_type_2"/>
</dbReference>
<dbReference type="InterPro" id="IPR009019">
    <property type="entry name" value="KH_sf_prok-type"/>
</dbReference>
<dbReference type="InterPro" id="IPR036419">
    <property type="entry name" value="Ribosomal_S3_C_sf"/>
</dbReference>
<dbReference type="InterPro" id="IPR005704">
    <property type="entry name" value="Ribosomal_uS3_bac-typ"/>
</dbReference>
<dbReference type="InterPro" id="IPR001351">
    <property type="entry name" value="Ribosomal_uS3_C"/>
</dbReference>
<dbReference type="InterPro" id="IPR018280">
    <property type="entry name" value="Ribosomal_uS3_CS"/>
</dbReference>
<dbReference type="NCBIfam" id="TIGR01009">
    <property type="entry name" value="rpsC_bact"/>
    <property type="match status" value="1"/>
</dbReference>
<dbReference type="PANTHER" id="PTHR11760">
    <property type="entry name" value="30S/40S RIBOSOMAL PROTEIN S3"/>
    <property type="match status" value="1"/>
</dbReference>
<dbReference type="PANTHER" id="PTHR11760:SF19">
    <property type="entry name" value="SMALL RIBOSOMAL SUBUNIT PROTEIN US3C"/>
    <property type="match status" value="1"/>
</dbReference>
<dbReference type="Pfam" id="PF07650">
    <property type="entry name" value="KH_2"/>
    <property type="match status" value="1"/>
</dbReference>
<dbReference type="Pfam" id="PF00189">
    <property type="entry name" value="Ribosomal_S3_C"/>
    <property type="match status" value="1"/>
</dbReference>
<dbReference type="SMART" id="SM00322">
    <property type="entry name" value="KH"/>
    <property type="match status" value="1"/>
</dbReference>
<dbReference type="SUPFAM" id="SSF54814">
    <property type="entry name" value="Prokaryotic type KH domain (KH-domain type II)"/>
    <property type="match status" value="1"/>
</dbReference>
<dbReference type="SUPFAM" id="SSF54821">
    <property type="entry name" value="Ribosomal protein S3 C-terminal domain"/>
    <property type="match status" value="1"/>
</dbReference>
<dbReference type="PROSITE" id="PS50823">
    <property type="entry name" value="KH_TYPE_2"/>
    <property type="match status" value="1"/>
</dbReference>
<dbReference type="PROSITE" id="PS00548">
    <property type="entry name" value="RIBOSOMAL_S3"/>
    <property type="match status" value="1"/>
</dbReference>
<evidence type="ECO:0000255" key="1">
    <source>
        <dbReference type="HAMAP-Rule" id="MF_01309"/>
    </source>
</evidence>
<evidence type="ECO:0000305" key="2"/>
<gene>
    <name evidence="1" type="primary">rpsC</name>
    <name type="ordered locus">Psyr_4542</name>
</gene>
<reference key="1">
    <citation type="journal article" date="2005" name="Proc. Natl. Acad. Sci. U.S.A.">
        <title>Comparison of the complete genome sequences of Pseudomonas syringae pv. syringae B728a and pv. tomato DC3000.</title>
        <authorList>
            <person name="Feil H."/>
            <person name="Feil W.S."/>
            <person name="Chain P."/>
            <person name="Larimer F."/>
            <person name="Dibartolo G."/>
            <person name="Copeland A."/>
            <person name="Lykidis A."/>
            <person name="Trong S."/>
            <person name="Nolan M."/>
            <person name="Goltsman E."/>
            <person name="Thiel J."/>
            <person name="Malfatti S."/>
            <person name="Loper J.E."/>
            <person name="Lapidus A."/>
            <person name="Detter J.C."/>
            <person name="Land M."/>
            <person name="Richardson P.M."/>
            <person name="Kyrpides N.C."/>
            <person name="Ivanova N."/>
            <person name="Lindow S.E."/>
        </authorList>
    </citation>
    <scope>NUCLEOTIDE SEQUENCE [LARGE SCALE GENOMIC DNA]</scope>
    <source>
        <strain>B728a</strain>
    </source>
</reference>
<protein>
    <recommendedName>
        <fullName evidence="1">Small ribosomal subunit protein uS3</fullName>
    </recommendedName>
    <alternativeName>
        <fullName evidence="2">30S ribosomal protein S3</fullName>
    </alternativeName>
</protein>
<sequence length="228" mass="25753">MGQKVHPIGIRLGIVKEHTSVWYADGRTYADYLFADLKVREYLQDKLKSASVSRIDIHRPAQTARITIHTARPGIVIGKKGEDVEKLRQDLTKQMGVPVHINIEEIRKPELDGMLVAQSVAQQLERRVMFRRAMKRAVQNAMRIGAKGIKIQVSGRLGGAEIARTEWYREGRVPLHTLRADIDYANYEAHTTYGVIGVKVWIFKGEVIGGRQEELKPQAPAPRKKAAK</sequence>
<organism>
    <name type="scientific">Pseudomonas syringae pv. syringae (strain B728a)</name>
    <dbReference type="NCBI Taxonomy" id="205918"/>
    <lineage>
        <taxon>Bacteria</taxon>
        <taxon>Pseudomonadati</taxon>
        <taxon>Pseudomonadota</taxon>
        <taxon>Gammaproteobacteria</taxon>
        <taxon>Pseudomonadales</taxon>
        <taxon>Pseudomonadaceae</taxon>
        <taxon>Pseudomonas</taxon>
        <taxon>Pseudomonas syringae</taxon>
    </lineage>
</organism>
<accession>Q4ZMQ0</accession>